<organism>
    <name type="scientific">Rhizobium meliloti (strain 1021)</name>
    <name type="common">Ensifer meliloti</name>
    <name type="synonym">Sinorhizobium meliloti</name>
    <dbReference type="NCBI Taxonomy" id="266834"/>
    <lineage>
        <taxon>Bacteria</taxon>
        <taxon>Pseudomonadati</taxon>
        <taxon>Pseudomonadota</taxon>
        <taxon>Alphaproteobacteria</taxon>
        <taxon>Hyphomicrobiales</taxon>
        <taxon>Rhizobiaceae</taxon>
        <taxon>Sinorhizobium/Ensifer group</taxon>
        <taxon>Sinorhizobium</taxon>
    </lineage>
</organism>
<reference key="1">
    <citation type="journal article" date="2001" name="Proc. Natl. Acad. Sci. U.S.A.">
        <title>Analysis of the chromosome sequence of the legume symbiont Sinorhizobium meliloti strain 1021.</title>
        <authorList>
            <person name="Capela D."/>
            <person name="Barloy-Hubler F."/>
            <person name="Gouzy J."/>
            <person name="Bothe G."/>
            <person name="Ampe F."/>
            <person name="Batut J."/>
            <person name="Boistard P."/>
            <person name="Becker A."/>
            <person name="Boutry M."/>
            <person name="Cadieu E."/>
            <person name="Dreano S."/>
            <person name="Gloux S."/>
            <person name="Godrie T."/>
            <person name="Goffeau A."/>
            <person name="Kahn D."/>
            <person name="Kiss E."/>
            <person name="Lelaure V."/>
            <person name="Masuy D."/>
            <person name="Pohl T."/>
            <person name="Portetelle D."/>
            <person name="Puehler A."/>
            <person name="Purnelle B."/>
            <person name="Ramsperger U."/>
            <person name="Renard C."/>
            <person name="Thebault P."/>
            <person name="Vandenbol M."/>
            <person name="Weidner S."/>
            <person name="Galibert F."/>
        </authorList>
    </citation>
    <scope>NUCLEOTIDE SEQUENCE [LARGE SCALE GENOMIC DNA]</scope>
    <source>
        <strain>1021</strain>
    </source>
</reference>
<reference key="2">
    <citation type="journal article" date="2001" name="Science">
        <title>The composite genome of the legume symbiont Sinorhizobium meliloti.</title>
        <authorList>
            <person name="Galibert F."/>
            <person name="Finan T.M."/>
            <person name="Long S.R."/>
            <person name="Puehler A."/>
            <person name="Abola P."/>
            <person name="Ampe F."/>
            <person name="Barloy-Hubler F."/>
            <person name="Barnett M.J."/>
            <person name="Becker A."/>
            <person name="Boistard P."/>
            <person name="Bothe G."/>
            <person name="Boutry M."/>
            <person name="Bowser L."/>
            <person name="Buhrmester J."/>
            <person name="Cadieu E."/>
            <person name="Capela D."/>
            <person name="Chain P."/>
            <person name="Cowie A."/>
            <person name="Davis R.W."/>
            <person name="Dreano S."/>
            <person name="Federspiel N.A."/>
            <person name="Fisher R.F."/>
            <person name="Gloux S."/>
            <person name="Godrie T."/>
            <person name="Goffeau A."/>
            <person name="Golding B."/>
            <person name="Gouzy J."/>
            <person name="Gurjal M."/>
            <person name="Hernandez-Lucas I."/>
            <person name="Hong A."/>
            <person name="Huizar L."/>
            <person name="Hyman R.W."/>
            <person name="Jones T."/>
            <person name="Kahn D."/>
            <person name="Kahn M.L."/>
            <person name="Kalman S."/>
            <person name="Keating D.H."/>
            <person name="Kiss E."/>
            <person name="Komp C."/>
            <person name="Lelaure V."/>
            <person name="Masuy D."/>
            <person name="Palm C."/>
            <person name="Peck M.C."/>
            <person name="Pohl T.M."/>
            <person name="Portetelle D."/>
            <person name="Purnelle B."/>
            <person name="Ramsperger U."/>
            <person name="Surzycki R."/>
            <person name="Thebault P."/>
            <person name="Vandenbol M."/>
            <person name="Vorhoelter F.J."/>
            <person name="Weidner S."/>
            <person name="Wells D.H."/>
            <person name="Wong K."/>
            <person name="Yeh K.-C."/>
            <person name="Batut J."/>
        </authorList>
    </citation>
    <scope>NUCLEOTIDE SEQUENCE [LARGE SCALE GENOMIC DNA]</scope>
    <source>
        <strain>1021</strain>
    </source>
</reference>
<comment type="function">
    <text evidence="1">Fluoride-specific ion channel. Important for reducing fluoride concentration in the cell, thus reducing its toxicity.</text>
</comment>
<comment type="catalytic activity">
    <reaction evidence="1">
        <text>fluoride(in) = fluoride(out)</text>
        <dbReference type="Rhea" id="RHEA:76159"/>
        <dbReference type="ChEBI" id="CHEBI:17051"/>
    </reaction>
    <physiologicalReaction direction="left-to-right" evidence="1">
        <dbReference type="Rhea" id="RHEA:76160"/>
    </physiologicalReaction>
</comment>
<comment type="activity regulation">
    <text evidence="1">Na(+) is not transported, but it plays an essential structural role and its presence is essential for fluoride channel function.</text>
</comment>
<comment type="subcellular location">
    <subcellularLocation>
        <location evidence="1">Cell inner membrane</location>
        <topology evidence="1">Multi-pass membrane protein</topology>
    </subcellularLocation>
</comment>
<comment type="similarity">
    <text evidence="1">Belongs to the fluoride channel Fluc/FEX (TC 1.A.43) family.</text>
</comment>
<keyword id="KW-0997">Cell inner membrane</keyword>
<keyword id="KW-1003">Cell membrane</keyword>
<keyword id="KW-0407">Ion channel</keyword>
<keyword id="KW-0406">Ion transport</keyword>
<keyword id="KW-0472">Membrane</keyword>
<keyword id="KW-0479">Metal-binding</keyword>
<keyword id="KW-1185">Reference proteome</keyword>
<keyword id="KW-0915">Sodium</keyword>
<keyword id="KW-0812">Transmembrane</keyword>
<keyword id="KW-1133">Transmembrane helix</keyword>
<keyword id="KW-0813">Transport</keyword>
<gene>
    <name evidence="1" type="primary">fluC</name>
    <name evidence="1" type="synonym">crcB</name>
    <name type="ordered locus">R01390</name>
    <name type="ORF">SMc01274</name>
</gene>
<protein>
    <recommendedName>
        <fullName evidence="1">Fluoride-specific ion channel FluC</fullName>
    </recommendedName>
</protein>
<accession>Q92QE1</accession>
<proteinExistence type="inferred from homology"/>
<dbReference type="EMBL" id="AL591688">
    <property type="protein sequence ID" value="CAC45969.1"/>
    <property type="molecule type" value="Genomic_DNA"/>
</dbReference>
<dbReference type="RefSeq" id="NP_385496.1">
    <property type="nucleotide sequence ID" value="NC_003047.1"/>
</dbReference>
<dbReference type="RefSeq" id="WP_010969203.1">
    <property type="nucleotide sequence ID" value="NC_003047.1"/>
</dbReference>
<dbReference type="SMR" id="Q92QE1"/>
<dbReference type="EnsemblBacteria" id="CAC45969">
    <property type="protein sequence ID" value="CAC45969"/>
    <property type="gene ID" value="SMc01274"/>
</dbReference>
<dbReference type="KEGG" id="sme:SMc01274"/>
<dbReference type="PATRIC" id="fig|266834.11.peg.2808"/>
<dbReference type="eggNOG" id="COG0239">
    <property type="taxonomic scope" value="Bacteria"/>
</dbReference>
<dbReference type="HOGENOM" id="CLU_114342_2_3_5"/>
<dbReference type="OrthoDB" id="9806299at2"/>
<dbReference type="Proteomes" id="UP000001976">
    <property type="component" value="Chromosome"/>
</dbReference>
<dbReference type="GO" id="GO:0005886">
    <property type="term" value="C:plasma membrane"/>
    <property type="evidence" value="ECO:0007669"/>
    <property type="project" value="UniProtKB-SubCell"/>
</dbReference>
<dbReference type="GO" id="GO:0062054">
    <property type="term" value="F:fluoride channel activity"/>
    <property type="evidence" value="ECO:0007669"/>
    <property type="project" value="UniProtKB-UniRule"/>
</dbReference>
<dbReference type="GO" id="GO:0046872">
    <property type="term" value="F:metal ion binding"/>
    <property type="evidence" value="ECO:0007669"/>
    <property type="project" value="UniProtKB-KW"/>
</dbReference>
<dbReference type="GO" id="GO:0140114">
    <property type="term" value="P:cellular detoxification of fluoride"/>
    <property type="evidence" value="ECO:0007669"/>
    <property type="project" value="UniProtKB-UniRule"/>
</dbReference>
<dbReference type="HAMAP" id="MF_00454">
    <property type="entry name" value="FluC"/>
    <property type="match status" value="1"/>
</dbReference>
<dbReference type="InterPro" id="IPR003691">
    <property type="entry name" value="FluC"/>
</dbReference>
<dbReference type="NCBIfam" id="TIGR00494">
    <property type="entry name" value="crcB"/>
    <property type="match status" value="1"/>
</dbReference>
<dbReference type="NCBIfam" id="NF010791">
    <property type="entry name" value="PRK14195.1"/>
    <property type="match status" value="1"/>
</dbReference>
<dbReference type="PANTHER" id="PTHR28259">
    <property type="entry name" value="FLUORIDE EXPORT PROTEIN 1-RELATED"/>
    <property type="match status" value="1"/>
</dbReference>
<dbReference type="PANTHER" id="PTHR28259:SF1">
    <property type="entry name" value="FLUORIDE EXPORT PROTEIN 1-RELATED"/>
    <property type="match status" value="1"/>
</dbReference>
<dbReference type="Pfam" id="PF02537">
    <property type="entry name" value="CRCB"/>
    <property type="match status" value="1"/>
</dbReference>
<name>FLUC_RHIME</name>
<sequence length="125" mass="13200">MNHILLVGAGGALGSVLRYLVGLWMLQRAGPAFPWGTLFVNVTGSFLIGFLAEFIMHKMGASPEMRVFLITGVLGGYTTFSAFSLDAIALLEHGQTMSGLAYIVASVGLSMLAVFAGLALMRAMV</sequence>
<evidence type="ECO:0000255" key="1">
    <source>
        <dbReference type="HAMAP-Rule" id="MF_00454"/>
    </source>
</evidence>
<feature type="chain" id="PRO_0000110163" description="Fluoride-specific ion channel FluC">
    <location>
        <begin position="1"/>
        <end position="125"/>
    </location>
</feature>
<feature type="transmembrane region" description="Helical" evidence="1">
    <location>
        <begin position="4"/>
        <end position="24"/>
    </location>
</feature>
<feature type="transmembrane region" description="Helical" evidence="1">
    <location>
        <begin position="32"/>
        <end position="52"/>
    </location>
</feature>
<feature type="transmembrane region" description="Helical" evidence="1">
    <location>
        <begin position="68"/>
        <end position="88"/>
    </location>
</feature>
<feature type="transmembrane region" description="Helical" evidence="1">
    <location>
        <begin position="100"/>
        <end position="120"/>
    </location>
</feature>
<feature type="binding site" evidence="1">
    <location>
        <position position="75"/>
    </location>
    <ligand>
        <name>Na(+)</name>
        <dbReference type="ChEBI" id="CHEBI:29101"/>
        <note>structural</note>
    </ligand>
</feature>
<feature type="binding site" evidence="1">
    <location>
        <position position="78"/>
    </location>
    <ligand>
        <name>Na(+)</name>
        <dbReference type="ChEBI" id="CHEBI:29101"/>
        <note>structural</note>
    </ligand>
</feature>